<organism>
    <name type="scientific">Danio rerio</name>
    <name type="common">Zebrafish</name>
    <name type="synonym">Brachydanio rerio</name>
    <dbReference type="NCBI Taxonomy" id="7955"/>
    <lineage>
        <taxon>Eukaryota</taxon>
        <taxon>Metazoa</taxon>
        <taxon>Chordata</taxon>
        <taxon>Craniata</taxon>
        <taxon>Vertebrata</taxon>
        <taxon>Euteleostomi</taxon>
        <taxon>Actinopterygii</taxon>
        <taxon>Neopterygii</taxon>
        <taxon>Teleostei</taxon>
        <taxon>Ostariophysi</taxon>
        <taxon>Cypriniformes</taxon>
        <taxon>Danionidae</taxon>
        <taxon>Danioninae</taxon>
        <taxon>Danio</taxon>
    </lineage>
</organism>
<accession>Q91981</accession>
<reference key="1">
    <citation type="journal article" date="1994" name="Brain Res. Mol. Brain Res.">
        <title>Different spatio-temporal expressions of three otx homeoprotein transcripts during zebrafish embryogenesis.</title>
        <authorList>
            <person name="Mori H."/>
            <person name="Miyazaki Y."/>
            <person name="Morita T."/>
            <person name="Nitta H."/>
            <person name="Mishina M."/>
        </authorList>
    </citation>
    <scope>NUCLEOTIDE SEQUENCE [MRNA]</scope>
    <source>
        <strain>AB</strain>
    </source>
</reference>
<reference key="2">
    <citation type="journal article" date="1994" name="Mech. Dev.">
        <title>Expression of two zebrafish orthodenticle-related genes in the embryonic brain.</title>
        <authorList>
            <person name="Li Y."/>
            <person name="Allende M.L."/>
            <person name="Finkelstein R."/>
            <person name="Weinberg E.S."/>
        </authorList>
    </citation>
    <scope>NUCLEOTIDE SEQUENCE [MRNA]</scope>
</reference>
<sequence length="289" mass="31594">MMSYLKQPPYTVNGLSLTTSGMDLLHPSVGYPATPRKQRRERTTFTRAQLDVLEALFAKTRYPDIFMREEVALKINLPESRVQVWFKNRRAKCRQQQQQQQNGGQNKVRPAKKKSSPAREASSESGASGQFTPPSSTSVPAISTTTAPVSIWSPASISPLSDPLSTSSSCMQRSYPMTYTQASGYSQGYAGSTSYFGGMDCGSYLTPMHHQLTGPGSTLSPMSSNAVTSHLNQSPASLPTQGYGASGLGFNSTADCLDYKDQASSWKLNFNADCLDYKDQTSSWKFQVL</sequence>
<gene>
    <name type="primary">otx2</name>
</gene>
<feature type="chain" id="PRO_0000049214" description="Homeobox protein OTX2">
    <location>
        <begin position="1"/>
        <end position="289"/>
    </location>
</feature>
<feature type="DNA-binding region" description="Homeobox" evidence="1">
    <location>
        <begin position="38"/>
        <end position="97"/>
    </location>
</feature>
<feature type="region of interest" description="Disordered" evidence="2">
    <location>
        <begin position="93"/>
        <end position="142"/>
    </location>
</feature>
<feature type="compositionally biased region" description="Low complexity" evidence="2">
    <location>
        <begin position="95"/>
        <end position="106"/>
    </location>
</feature>
<feature type="compositionally biased region" description="Low complexity" evidence="2">
    <location>
        <begin position="118"/>
        <end position="129"/>
    </location>
</feature>
<feature type="compositionally biased region" description="Polar residues" evidence="2">
    <location>
        <begin position="130"/>
        <end position="142"/>
    </location>
</feature>
<keyword id="KW-0217">Developmental protein</keyword>
<keyword id="KW-0238">DNA-binding</keyword>
<keyword id="KW-0371">Homeobox</keyword>
<keyword id="KW-0539">Nucleus</keyword>
<keyword id="KW-1185">Reference proteome</keyword>
<protein>
    <recommendedName>
        <fullName>Homeobox protein OTX2</fullName>
        <shortName>zOTX2</shortName>
    </recommendedName>
    <alternativeName>
        <fullName>Orthodenticle homolog 2</fullName>
    </alternativeName>
</protein>
<comment type="function">
    <text>May play a role in very early embryogenesis, gastrulation, and the development and subdivision of the diencephalon and the midbrain.</text>
</comment>
<comment type="subcellular location">
    <subcellularLocation>
        <location evidence="3">Nucleus</location>
    </subcellularLocation>
</comment>
<comment type="developmental stage">
    <text>Appears at 9 hours of development, and at 12 hours of development significant levels are found in the developing brain posterior to ocular vesicles. Distributed mainly in the midbrain, part of the diencephalon beneath the epiphysis and in the epiphysis at 18 hours of development. Found in the ventral part of the midbrain and in the dorsal part of the diencephalon at 24 hours of development.</text>
</comment>
<comment type="similarity">
    <text evidence="3">Belongs to the paired homeobox family. Bicoid subfamily.</text>
</comment>
<proteinExistence type="evidence at transcript level"/>
<name>OTX2_DANRE</name>
<dbReference type="EMBL" id="D26173">
    <property type="protein sequence ID" value="BAA05159.1"/>
    <property type="molecule type" value="mRNA"/>
</dbReference>
<dbReference type="EMBL" id="U14592">
    <property type="protein sequence ID" value="AAA78901.1"/>
    <property type="molecule type" value="mRNA"/>
</dbReference>
<dbReference type="PIR" id="I51752">
    <property type="entry name" value="I51752"/>
</dbReference>
<dbReference type="RefSeq" id="NP_571326.1">
    <property type="nucleotide sequence ID" value="NM_131251.1"/>
</dbReference>
<dbReference type="RefSeq" id="XP_005158940.1">
    <property type="nucleotide sequence ID" value="XM_005158883.3"/>
</dbReference>
<dbReference type="RefSeq" id="XP_009291522.1">
    <property type="nucleotide sequence ID" value="XM_009293247.2"/>
</dbReference>
<dbReference type="SMR" id="Q91981"/>
<dbReference type="BioGRID" id="78681">
    <property type="interactions" value="1"/>
</dbReference>
<dbReference type="FunCoup" id="Q91981">
    <property type="interactions" value="122"/>
</dbReference>
<dbReference type="STRING" id="7955.ENSDARP00000111153"/>
<dbReference type="PaxDb" id="7955-ENSDARP00000111153"/>
<dbReference type="Ensembl" id="ENSDART00000008816">
    <property type="protein sequence ID" value="ENSDARP00000020202"/>
    <property type="gene ID" value="ENSDARG00000011235"/>
</dbReference>
<dbReference type="Ensembl" id="ENSDART00000126097">
    <property type="protein sequence ID" value="ENSDARP00000111153"/>
    <property type="gene ID" value="ENSDARG00000011235"/>
</dbReference>
<dbReference type="GeneID" id="30501"/>
<dbReference type="KEGG" id="dre:30501"/>
<dbReference type="AGR" id="ZFIN:ZDB-GENE-980526-406"/>
<dbReference type="CTD" id="30501"/>
<dbReference type="ZFIN" id="ZDB-GENE-980526-406">
    <property type="gene designation" value="otx2b"/>
</dbReference>
<dbReference type="eggNOG" id="KOG2251">
    <property type="taxonomic scope" value="Eukaryota"/>
</dbReference>
<dbReference type="HOGENOM" id="CLU_064370_0_0_1"/>
<dbReference type="InParanoid" id="Q91981"/>
<dbReference type="OMA" id="QTNISMM"/>
<dbReference type="OrthoDB" id="6159439at2759"/>
<dbReference type="PhylomeDB" id="Q91981"/>
<dbReference type="TreeFam" id="TF351179"/>
<dbReference type="PRO" id="PR:Q91981"/>
<dbReference type="Proteomes" id="UP000000437">
    <property type="component" value="Chromosome 17"/>
</dbReference>
<dbReference type="Bgee" id="ENSDARG00000011235">
    <property type="expression patterns" value="Expressed in camera-type eye and 56 other cell types or tissues"/>
</dbReference>
<dbReference type="ExpressionAtlas" id="Q91981">
    <property type="expression patterns" value="baseline and differential"/>
</dbReference>
<dbReference type="GO" id="GO:0005634">
    <property type="term" value="C:nucleus"/>
    <property type="evidence" value="ECO:0000318"/>
    <property type="project" value="GO_Central"/>
</dbReference>
<dbReference type="GO" id="GO:0000981">
    <property type="term" value="F:DNA-binding transcription factor activity, RNA polymerase II-specific"/>
    <property type="evidence" value="ECO:0000318"/>
    <property type="project" value="GO_Central"/>
</dbReference>
<dbReference type="GO" id="GO:0000978">
    <property type="term" value="F:RNA polymerase II cis-regulatory region sequence-specific DNA binding"/>
    <property type="evidence" value="ECO:0000318"/>
    <property type="project" value="GO_Central"/>
</dbReference>
<dbReference type="GO" id="GO:0097306">
    <property type="term" value="P:cellular response to alcohol"/>
    <property type="evidence" value="ECO:0000314"/>
    <property type="project" value="ZFIN"/>
</dbReference>
<dbReference type="GO" id="GO:0021549">
    <property type="term" value="P:cerebellum development"/>
    <property type="evidence" value="ECO:0000316"/>
    <property type="project" value="ZFIN"/>
</dbReference>
<dbReference type="GO" id="GO:0030902">
    <property type="term" value="P:hindbrain development"/>
    <property type="evidence" value="ECO:0000316"/>
    <property type="project" value="ZFIN"/>
</dbReference>
<dbReference type="GO" id="GO:0030901">
    <property type="term" value="P:midbrain development"/>
    <property type="evidence" value="ECO:0000316"/>
    <property type="project" value="ZFIN"/>
</dbReference>
<dbReference type="GO" id="GO:0030917">
    <property type="term" value="P:midbrain-hindbrain boundary development"/>
    <property type="evidence" value="ECO:0000316"/>
    <property type="project" value="ZFIN"/>
</dbReference>
<dbReference type="GO" id="GO:0006357">
    <property type="term" value="P:regulation of transcription by RNA polymerase II"/>
    <property type="evidence" value="ECO:0000318"/>
    <property type="project" value="GO_Central"/>
</dbReference>
<dbReference type="GO" id="GO:0003406">
    <property type="term" value="P:retinal pigment epithelium development"/>
    <property type="evidence" value="ECO:0000316"/>
    <property type="project" value="ZFIN"/>
</dbReference>
<dbReference type="CDD" id="cd00086">
    <property type="entry name" value="homeodomain"/>
    <property type="match status" value="1"/>
</dbReference>
<dbReference type="FunFam" id="1.10.10.60:FF:000142">
    <property type="entry name" value="homeobox protein OTX2 isoform X2"/>
    <property type="match status" value="1"/>
</dbReference>
<dbReference type="Gene3D" id="1.10.10.60">
    <property type="entry name" value="Homeodomain-like"/>
    <property type="match status" value="1"/>
</dbReference>
<dbReference type="InterPro" id="IPR001356">
    <property type="entry name" value="HD"/>
</dbReference>
<dbReference type="InterPro" id="IPR017970">
    <property type="entry name" value="Homeobox_CS"/>
</dbReference>
<dbReference type="InterPro" id="IPR009057">
    <property type="entry name" value="Homeodomain-like_sf"/>
</dbReference>
<dbReference type="InterPro" id="IPR003022">
    <property type="entry name" value="Otx2_TF"/>
</dbReference>
<dbReference type="InterPro" id="IPR003025">
    <property type="entry name" value="Otx_TF"/>
</dbReference>
<dbReference type="InterPro" id="IPR013851">
    <property type="entry name" value="Otx_TF_C"/>
</dbReference>
<dbReference type="PANTHER" id="PTHR45793">
    <property type="entry name" value="HOMEOBOX PROTEIN"/>
    <property type="match status" value="1"/>
</dbReference>
<dbReference type="PANTHER" id="PTHR45793:SF2">
    <property type="entry name" value="HOMEOBOX PROTEIN OTX2"/>
    <property type="match status" value="1"/>
</dbReference>
<dbReference type="Pfam" id="PF00046">
    <property type="entry name" value="Homeodomain"/>
    <property type="match status" value="1"/>
</dbReference>
<dbReference type="Pfam" id="PF03529">
    <property type="entry name" value="TF_Otx"/>
    <property type="match status" value="1"/>
</dbReference>
<dbReference type="PRINTS" id="PR01257">
    <property type="entry name" value="OTX2HOMEOBOX"/>
</dbReference>
<dbReference type="PRINTS" id="PR01255">
    <property type="entry name" value="OTXHOMEOBOX"/>
</dbReference>
<dbReference type="SMART" id="SM00389">
    <property type="entry name" value="HOX"/>
    <property type="match status" value="1"/>
</dbReference>
<dbReference type="SUPFAM" id="SSF46689">
    <property type="entry name" value="Homeodomain-like"/>
    <property type="match status" value="1"/>
</dbReference>
<dbReference type="PROSITE" id="PS00027">
    <property type="entry name" value="HOMEOBOX_1"/>
    <property type="match status" value="1"/>
</dbReference>
<dbReference type="PROSITE" id="PS50071">
    <property type="entry name" value="HOMEOBOX_2"/>
    <property type="match status" value="1"/>
</dbReference>
<evidence type="ECO:0000255" key="1">
    <source>
        <dbReference type="PROSITE-ProRule" id="PRU00108"/>
    </source>
</evidence>
<evidence type="ECO:0000256" key="2">
    <source>
        <dbReference type="SAM" id="MobiDB-lite"/>
    </source>
</evidence>
<evidence type="ECO:0000305" key="3"/>